<sequence>MSRSSIGPELEVNSKPLKGPIICPIRTYYSKVPLELLFPTTDRRFYFLKSYVFCSANSVPLYLLLLTSALHFNSYILLFDFQLKSKLLAYKRRARCVAGLLKSMERYPESTVTAMI</sequence>
<proteinExistence type="predicted"/>
<reference key="1">
    <citation type="journal article" date="1997" name="Nat. Genet.">
        <title>The mitochondrial genome of Arabidopsis thaliana contains 57 genes in 366,924 nucleotides.</title>
        <authorList>
            <person name="Unseld M."/>
            <person name="Marienfeld J.R."/>
            <person name="Brandt P."/>
            <person name="Brennicke A."/>
        </authorList>
    </citation>
    <scope>NUCLEOTIDE SEQUENCE [LARGE SCALE GENOMIC DNA]</scope>
    <source>
        <strain>cv. C24</strain>
    </source>
</reference>
<reference key="2">
    <citation type="journal article" date="2018" name="Plant Cell">
        <title>Correction of persistent errors in Arabidopsis reference mitochondrial genomes.</title>
        <authorList>
            <person name="Sloan D.B."/>
            <person name="Wu Z."/>
            <person name="Sharbrough J."/>
        </authorList>
    </citation>
    <scope>NUCLEOTIDE SEQUENCE [LARGE SCALE GENOMIC DNA]</scope>
    <source>
        <strain>cv. Columbia</strain>
    </source>
</reference>
<evidence type="ECO:0000255" key="1"/>
<evidence type="ECO:0000305" key="2"/>
<comment type="subcellular location">
    <subcellularLocation>
        <location evidence="2">Mitochondrion membrane</location>
        <topology evidence="2">Single-pass membrane protein</topology>
    </subcellularLocation>
</comment>
<accession>P93284</accession>
<organism>
    <name type="scientific">Arabidopsis thaliana</name>
    <name type="common">Mouse-ear cress</name>
    <dbReference type="NCBI Taxonomy" id="3702"/>
    <lineage>
        <taxon>Eukaryota</taxon>
        <taxon>Viridiplantae</taxon>
        <taxon>Streptophyta</taxon>
        <taxon>Embryophyta</taxon>
        <taxon>Tracheophyta</taxon>
        <taxon>Spermatophyta</taxon>
        <taxon>Magnoliopsida</taxon>
        <taxon>eudicotyledons</taxon>
        <taxon>Gunneridae</taxon>
        <taxon>Pentapetalae</taxon>
        <taxon>rosids</taxon>
        <taxon>malvids</taxon>
        <taxon>Brassicales</taxon>
        <taxon>Brassicaceae</taxon>
        <taxon>Camelineae</taxon>
        <taxon>Arabidopsis</taxon>
    </lineage>
</organism>
<gene>
    <name type="ordered locus">AtMg00150</name>
</gene>
<dbReference type="EMBL" id="Y08501">
    <property type="protein sequence ID" value="CAA69760.1"/>
    <property type="molecule type" value="Genomic_DNA"/>
</dbReference>
<dbReference type="EMBL" id="BK010421">
    <property type="status" value="NOT_ANNOTATED_CDS"/>
    <property type="molecule type" value="Genomic_DNA"/>
</dbReference>
<dbReference type="RefSeq" id="NP_085486.1">
    <property type="nucleotide sequence ID" value="NC_001284.2"/>
</dbReference>
<dbReference type="STRING" id="3702.P93284"/>
<dbReference type="PaxDb" id="3702-ATMG00150.1"/>
<dbReference type="EnsemblPlants" id="ATMG00150.1">
    <property type="protein sequence ID" value="ATMG00150.1"/>
    <property type="gene ID" value="ATMG00150"/>
</dbReference>
<dbReference type="Gramene" id="ATMG00150.1">
    <property type="protein sequence ID" value="ATMG00150.1"/>
    <property type="gene ID" value="ATMG00150"/>
</dbReference>
<dbReference type="Araport" id="ATMG00150"/>
<dbReference type="TAIR" id="ATMG00150">
    <property type="gene designation" value="ORF116"/>
</dbReference>
<dbReference type="HOGENOM" id="CLU_2100253_0_0_1"/>
<dbReference type="InParanoid" id="P93284"/>
<dbReference type="PRO" id="PR:P93284"/>
<dbReference type="Proteomes" id="UP000006548">
    <property type="component" value="Mitochondrion MT"/>
</dbReference>
<dbReference type="ExpressionAtlas" id="P93284">
    <property type="expression patterns" value="baseline and differential"/>
</dbReference>
<dbReference type="GO" id="GO:0031966">
    <property type="term" value="C:mitochondrial membrane"/>
    <property type="evidence" value="ECO:0007669"/>
    <property type="project" value="UniProtKB-SubCell"/>
</dbReference>
<name>M150_ARATH</name>
<geneLocation type="mitochondrion"/>
<feature type="chain" id="PRO_0000196758" description="Uncharacterized mitochondrial protein AtMg00150">
    <location>
        <begin position="1"/>
        <end position="116"/>
    </location>
</feature>
<feature type="transmembrane region" description="Helical" evidence="1">
    <location>
        <begin position="52"/>
        <end position="72"/>
    </location>
</feature>
<keyword id="KW-0472">Membrane</keyword>
<keyword id="KW-0496">Mitochondrion</keyword>
<keyword id="KW-1185">Reference proteome</keyword>
<keyword id="KW-0812">Transmembrane</keyword>
<keyword id="KW-1133">Transmembrane helix</keyword>
<protein>
    <recommendedName>
        <fullName>Uncharacterized mitochondrial protein AtMg00150</fullName>
    </recommendedName>
    <alternativeName>
        <fullName>ORF116</fullName>
    </alternativeName>
</protein>